<proteinExistence type="inferred from homology"/>
<comment type="function">
    <text evidence="1">Binds together with bS18 to 16S ribosomal RNA.</text>
</comment>
<comment type="similarity">
    <text evidence="1">Belongs to the bacterial ribosomal protein bS6 family.</text>
</comment>
<protein>
    <recommendedName>
        <fullName evidence="1">Small ribosomal subunit protein bS6</fullName>
    </recommendedName>
    <alternativeName>
        <fullName evidence="2">30S ribosomal protein S6</fullName>
    </alternativeName>
</protein>
<sequence length="101" mass="11581">MRPYELMVIIDPEVEERTVESSLQKFLNVITTDGGTIEKVDIWGRRRLAYDIKKKSEGIYAVVNFTAAPATAKELDRQLSLNETIMRTKIIRPEDQKVVAE</sequence>
<organism>
    <name type="scientific">Paenarthrobacter aurescens (strain TC1)</name>
    <dbReference type="NCBI Taxonomy" id="290340"/>
    <lineage>
        <taxon>Bacteria</taxon>
        <taxon>Bacillati</taxon>
        <taxon>Actinomycetota</taxon>
        <taxon>Actinomycetes</taxon>
        <taxon>Micrococcales</taxon>
        <taxon>Micrococcaceae</taxon>
        <taxon>Paenarthrobacter</taxon>
    </lineage>
</organism>
<name>RS6_PAEAT</name>
<gene>
    <name evidence="1" type="primary">rpsF</name>
    <name type="ordered locus">AAur_4165</name>
</gene>
<dbReference type="EMBL" id="CP000474">
    <property type="protein sequence ID" value="ABM07963.1"/>
    <property type="molecule type" value="Genomic_DNA"/>
</dbReference>
<dbReference type="RefSeq" id="WP_011776755.1">
    <property type="nucleotide sequence ID" value="NC_008711.1"/>
</dbReference>
<dbReference type="SMR" id="A1RC70"/>
<dbReference type="STRING" id="290340.AAur_4165"/>
<dbReference type="GeneID" id="97303014"/>
<dbReference type="KEGG" id="aau:AAur_4165"/>
<dbReference type="eggNOG" id="COG0360">
    <property type="taxonomic scope" value="Bacteria"/>
</dbReference>
<dbReference type="HOGENOM" id="CLU_113441_5_3_11"/>
<dbReference type="OrthoDB" id="9812702at2"/>
<dbReference type="Proteomes" id="UP000000637">
    <property type="component" value="Chromosome"/>
</dbReference>
<dbReference type="GO" id="GO:0005737">
    <property type="term" value="C:cytoplasm"/>
    <property type="evidence" value="ECO:0007669"/>
    <property type="project" value="UniProtKB-ARBA"/>
</dbReference>
<dbReference type="GO" id="GO:1990904">
    <property type="term" value="C:ribonucleoprotein complex"/>
    <property type="evidence" value="ECO:0007669"/>
    <property type="project" value="UniProtKB-KW"/>
</dbReference>
<dbReference type="GO" id="GO:0005840">
    <property type="term" value="C:ribosome"/>
    <property type="evidence" value="ECO:0007669"/>
    <property type="project" value="UniProtKB-KW"/>
</dbReference>
<dbReference type="GO" id="GO:0070181">
    <property type="term" value="F:small ribosomal subunit rRNA binding"/>
    <property type="evidence" value="ECO:0007669"/>
    <property type="project" value="TreeGrafter"/>
</dbReference>
<dbReference type="GO" id="GO:0003735">
    <property type="term" value="F:structural constituent of ribosome"/>
    <property type="evidence" value="ECO:0007669"/>
    <property type="project" value="InterPro"/>
</dbReference>
<dbReference type="GO" id="GO:0006412">
    <property type="term" value="P:translation"/>
    <property type="evidence" value="ECO:0007669"/>
    <property type="project" value="UniProtKB-UniRule"/>
</dbReference>
<dbReference type="CDD" id="cd00473">
    <property type="entry name" value="bS6"/>
    <property type="match status" value="1"/>
</dbReference>
<dbReference type="FunFam" id="3.30.70.60:FF:000002">
    <property type="entry name" value="30S ribosomal protein S6"/>
    <property type="match status" value="1"/>
</dbReference>
<dbReference type="Gene3D" id="3.30.70.60">
    <property type="match status" value="1"/>
</dbReference>
<dbReference type="HAMAP" id="MF_00360">
    <property type="entry name" value="Ribosomal_bS6"/>
    <property type="match status" value="1"/>
</dbReference>
<dbReference type="InterPro" id="IPR000529">
    <property type="entry name" value="Ribosomal_bS6"/>
</dbReference>
<dbReference type="InterPro" id="IPR020815">
    <property type="entry name" value="Ribosomal_bS6_CS"/>
</dbReference>
<dbReference type="InterPro" id="IPR035980">
    <property type="entry name" value="Ribosomal_bS6_sf"/>
</dbReference>
<dbReference type="InterPro" id="IPR020814">
    <property type="entry name" value="Ribosomal_S6_plastid/chlpt"/>
</dbReference>
<dbReference type="InterPro" id="IPR014717">
    <property type="entry name" value="Transl_elong_EF1B/ribsomal_bS6"/>
</dbReference>
<dbReference type="NCBIfam" id="TIGR00166">
    <property type="entry name" value="S6"/>
    <property type="match status" value="1"/>
</dbReference>
<dbReference type="PANTHER" id="PTHR21011">
    <property type="entry name" value="MITOCHONDRIAL 28S RIBOSOMAL PROTEIN S6"/>
    <property type="match status" value="1"/>
</dbReference>
<dbReference type="PANTHER" id="PTHR21011:SF1">
    <property type="entry name" value="SMALL RIBOSOMAL SUBUNIT PROTEIN BS6M"/>
    <property type="match status" value="1"/>
</dbReference>
<dbReference type="Pfam" id="PF01250">
    <property type="entry name" value="Ribosomal_S6"/>
    <property type="match status" value="1"/>
</dbReference>
<dbReference type="SUPFAM" id="SSF54995">
    <property type="entry name" value="Ribosomal protein S6"/>
    <property type="match status" value="1"/>
</dbReference>
<dbReference type="PROSITE" id="PS01048">
    <property type="entry name" value="RIBOSOMAL_S6"/>
    <property type="match status" value="1"/>
</dbReference>
<evidence type="ECO:0000255" key="1">
    <source>
        <dbReference type="HAMAP-Rule" id="MF_00360"/>
    </source>
</evidence>
<evidence type="ECO:0000305" key="2"/>
<feature type="chain" id="PRO_1000005213" description="Small ribosomal subunit protein bS6">
    <location>
        <begin position="1"/>
        <end position="101"/>
    </location>
</feature>
<keyword id="KW-0687">Ribonucleoprotein</keyword>
<keyword id="KW-0689">Ribosomal protein</keyword>
<keyword id="KW-0694">RNA-binding</keyword>
<keyword id="KW-0699">rRNA-binding</keyword>
<accession>A1RC70</accession>
<reference key="1">
    <citation type="journal article" date="2006" name="PLoS Genet.">
        <title>Secrets of soil survival revealed by the genome sequence of Arthrobacter aurescens TC1.</title>
        <authorList>
            <person name="Mongodin E.F."/>
            <person name="Shapir N."/>
            <person name="Daugherty S.C."/>
            <person name="DeBoy R.T."/>
            <person name="Emerson J.B."/>
            <person name="Shvartzbeyn A."/>
            <person name="Radune D."/>
            <person name="Vamathevan J."/>
            <person name="Riggs F."/>
            <person name="Grinberg V."/>
            <person name="Khouri H.M."/>
            <person name="Wackett L.P."/>
            <person name="Nelson K.E."/>
            <person name="Sadowsky M.J."/>
        </authorList>
    </citation>
    <scope>NUCLEOTIDE SEQUENCE [LARGE SCALE GENOMIC DNA]</scope>
    <source>
        <strain>TC1</strain>
    </source>
</reference>